<organism>
    <name type="scientific">Bacillus cereus (strain ATCC 14579 / DSM 31 / CCUG 7414 / JCM 2152 / NBRC 15305 / NCIMB 9373 / NCTC 2599 / NRRL B-3711)</name>
    <dbReference type="NCBI Taxonomy" id="226900"/>
    <lineage>
        <taxon>Bacteria</taxon>
        <taxon>Bacillati</taxon>
        <taxon>Bacillota</taxon>
        <taxon>Bacilli</taxon>
        <taxon>Bacillales</taxon>
        <taxon>Bacillaceae</taxon>
        <taxon>Bacillus</taxon>
        <taxon>Bacillus cereus group</taxon>
    </lineage>
</organism>
<reference key="1">
    <citation type="journal article" date="2003" name="Nature">
        <title>Genome sequence of Bacillus cereus and comparative analysis with Bacillus anthracis.</title>
        <authorList>
            <person name="Ivanova N."/>
            <person name="Sorokin A."/>
            <person name="Anderson I."/>
            <person name="Galleron N."/>
            <person name="Candelon B."/>
            <person name="Kapatral V."/>
            <person name="Bhattacharyya A."/>
            <person name="Reznik G."/>
            <person name="Mikhailova N."/>
            <person name="Lapidus A."/>
            <person name="Chu L."/>
            <person name="Mazur M."/>
            <person name="Goltsman E."/>
            <person name="Larsen N."/>
            <person name="D'Souza M."/>
            <person name="Walunas T."/>
            <person name="Grechkin Y."/>
            <person name="Pusch G."/>
            <person name="Haselkorn R."/>
            <person name="Fonstein M."/>
            <person name="Ehrlich S.D."/>
            <person name="Overbeek R."/>
            <person name="Kyrpides N.C."/>
        </authorList>
    </citation>
    <scope>NUCLEOTIDE SEQUENCE [LARGE SCALE GENOMIC DNA]</scope>
    <source>
        <strain>ATCC 14579 / DSM 31 / CCUG 7414 / JCM 2152 / NBRC 15305 / NCIMB 9373 / NCTC 2599 / NRRL B-3711</strain>
    </source>
</reference>
<name>PYRF_BACCR</name>
<feature type="chain" id="PRO_0000134524" description="Orotidine 5'-phosphate decarboxylase">
    <location>
        <begin position="1"/>
        <end position="238"/>
    </location>
</feature>
<feature type="active site" description="Proton donor" evidence="1">
    <location>
        <position position="61"/>
    </location>
</feature>
<feature type="binding site" evidence="1">
    <location>
        <position position="10"/>
    </location>
    <ligand>
        <name>substrate</name>
    </ligand>
</feature>
<feature type="binding site" evidence="1">
    <location>
        <position position="32"/>
    </location>
    <ligand>
        <name>substrate</name>
    </ligand>
</feature>
<feature type="binding site" evidence="1">
    <location>
        <begin position="59"/>
        <end position="68"/>
    </location>
    <ligand>
        <name>substrate</name>
    </ligand>
</feature>
<feature type="binding site" evidence="1">
    <location>
        <position position="122"/>
    </location>
    <ligand>
        <name>substrate</name>
    </ligand>
</feature>
<feature type="binding site" evidence="1">
    <location>
        <position position="184"/>
    </location>
    <ligand>
        <name>substrate</name>
    </ligand>
</feature>
<feature type="binding site" evidence="1">
    <location>
        <position position="193"/>
    </location>
    <ligand>
        <name>substrate</name>
    </ligand>
</feature>
<feature type="binding site" evidence="1">
    <location>
        <position position="213"/>
    </location>
    <ligand>
        <name>substrate</name>
    </ligand>
</feature>
<feature type="binding site" evidence="1">
    <location>
        <position position="214"/>
    </location>
    <ligand>
        <name>substrate</name>
    </ligand>
</feature>
<accession>Q819S6</accession>
<protein>
    <recommendedName>
        <fullName evidence="1">Orotidine 5'-phosphate decarboxylase</fullName>
        <ecNumber evidence="1">4.1.1.23</ecNumber>
    </recommendedName>
    <alternativeName>
        <fullName evidence="1">OMP decarboxylase</fullName>
        <shortName evidence="1">OMPDCase</shortName>
        <shortName evidence="1">OMPdecase</shortName>
    </alternativeName>
</protein>
<keyword id="KW-0210">Decarboxylase</keyword>
<keyword id="KW-0456">Lyase</keyword>
<keyword id="KW-0665">Pyrimidine biosynthesis</keyword>
<keyword id="KW-1185">Reference proteome</keyword>
<dbReference type="EC" id="4.1.1.23" evidence="1"/>
<dbReference type="EMBL" id="AE016877">
    <property type="protein sequence ID" value="AAP10804.1"/>
    <property type="molecule type" value="Genomic_DNA"/>
</dbReference>
<dbReference type="RefSeq" id="NP_833603.1">
    <property type="nucleotide sequence ID" value="NC_004722.1"/>
</dbReference>
<dbReference type="RefSeq" id="WP_000083510.1">
    <property type="nucleotide sequence ID" value="NZ_CP138336.1"/>
</dbReference>
<dbReference type="SMR" id="Q819S6"/>
<dbReference type="STRING" id="226900.BC_3883"/>
<dbReference type="KEGG" id="bce:BC3883"/>
<dbReference type="PATRIC" id="fig|226900.8.peg.4005"/>
<dbReference type="HOGENOM" id="CLU_067069_1_1_9"/>
<dbReference type="OrthoDB" id="9806203at2"/>
<dbReference type="UniPathway" id="UPA00070">
    <property type="reaction ID" value="UER00120"/>
</dbReference>
<dbReference type="PRO" id="PR:Q819S6"/>
<dbReference type="Proteomes" id="UP000001417">
    <property type="component" value="Chromosome"/>
</dbReference>
<dbReference type="GO" id="GO:0005829">
    <property type="term" value="C:cytosol"/>
    <property type="evidence" value="ECO:0000318"/>
    <property type="project" value="GO_Central"/>
</dbReference>
<dbReference type="GO" id="GO:0004590">
    <property type="term" value="F:orotidine-5'-phosphate decarboxylase activity"/>
    <property type="evidence" value="ECO:0000318"/>
    <property type="project" value="GO_Central"/>
</dbReference>
<dbReference type="GO" id="GO:0006207">
    <property type="term" value="P:'de novo' pyrimidine nucleobase biosynthetic process"/>
    <property type="evidence" value="ECO:0000318"/>
    <property type="project" value="GO_Central"/>
</dbReference>
<dbReference type="GO" id="GO:0044205">
    <property type="term" value="P:'de novo' UMP biosynthetic process"/>
    <property type="evidence" value="ECO:0007669"/>
    <property type="project" value="UniProtKB-UniRule"/>
</dbReference>
<dbReference type="CDD" id="cd04725">
    <property type="entry name" value="OMP_decarboxylase_like"/>
    <property type="match status" value="1"/>
</dbReference>
<dbReference type="FunFam" id="3.20.20.70:FF:000015">
    <property type="entry name" value="Orotidine 5'-phosphate decarboxylase"/>
    <property type="match status" value="1"/>
</dbReference>
<dbReference type="Gene3D" id="3.20.20.70">
    <property type="entry name" value="Aldolase class I"/>
    <property type="match status" value="1"/>
</dbReference>
<dbReference type="HAMAP" id="MF_01200_B">
    <property type="entry name" value="OMPdecase_type1_B"/>
    <property type="match status" value="1"/>
</dbReference>
<dbReference type="InterPro" id="IPR013785">
    <property type="entry name" value="Aldolase_TIM"/>
</dbReference>
<dbReference type="InterPro" id="IPR014732">
    <property type="entry name" value="OMPdecase"/>
</dbReference>
<dbReference type="InterPro" id="IPR018089">
    <property type="entry name" value="OMPdecase_AS"/>
</dbReference>
<dbReference type="InterPro" id="IPR047596">
    <property type="entry name" value="OMPdecase_bac"/>
</dbReference>
<dbReference type="InterPro" id="IPR001754">
    <property type="entry name" value="OMPdeCOase_dom"/>
</dbReference>
<dbReference type="InterPro" id="IPR011060">
    <property type="entry name" value="RibuloseP-bd_barrel"/>
</dbReference>
<dbReference type="NCBIfam" id="NF001273">
    <property type="entry name" value="PRK00230.1"/>
    <property type="match status" value="1"/>
</dbReference>
<dbReference type="NCBIfam" id="TIGR01740">
    <property type="entry name" value="pyrF"/>
    <property type="match status" value="1"/>
</dbReference>
<dbReference type="PANTHER" id="PTHR32119">
    <property type="entry name" value="OROTIDINE 5'-PHOSPHATE DECARBOXYLASE"/>
    <property type="match status" value="1"/>
</dbReference>
<dbReference type="PANTHER" id="PTHR32119:SF2">
    <property type="entry name" value="OROTIDINE 5'-PHOSPHATE DECARBOXYLASE"/>
    <property type="match status" value="1"/>
</dbReference>
<dbReference type="Pfam" id="PF00215">
    <property type="entry name" value="OMPdecase"/>
    <property type="match status" value="1"/>
</dbReference>
<dbReference type="SMART" id="SM00934">
    <property type="entry name" value="OMPdecase"/>
    <property type="match status" value="1"/>
</dbReference>
<dbReference type="SUPFAM" id="SSF51366">
    <property type="entry name" value="Ribulose-phoshate binding barrel"/>
    <property type="match status" value="1"/>
</dbReference>
<dbReference type="PROSITE" id="PS00156">
    <property type="entry name" value="OMPDECASE"/>
    <property type="match status" value="1"/>
</dbReference>
<evidence type="ECO:0000255" key="1">
    <source>
        <dbReference type="HAMAP-Rule" id="MF_01200"/>
    </source>
</evidence>
<comment type="function">
    <text evidence="1">Catalyzes the decarboxylation of orotidine 5'-monophosphate (OMP) to uridine 5'-monophosphate (UMP).</text>
</comment>
<comment type="catalytic activity">
    <reaction evidence="1">
        <text>orotidine 5'-phosphate + H(+) = UMP + CO2</text>
        <dbReference type="Rhea" id="RHEA:11596"/>
        <dbReference type="ChEBI" id="CHEBI:15378"/>
        <dbReference type="ChEBI" id="CHEBI:16526"/>
        <dbReference type="ChEBI" id="CHEBI:57538"/>
        <dbReference type="ChEBI" id="CHEBI:57865"/>
        <dbReference type="EC" id="4.1.1.23"/>
    </reaction>
</comment>
<comment type="pathway">
    <text evidence="1">Pyrimidine metabolism; UMP biosynthesis via de novo pathway; UMP from orotate: step 2/2.</text>
</comment>
<comment type="subunit">
    <text evidence="1">Homodimer.</text>
</comment>
<comment type="similarity">
    <text evidence="1">Belongs to the OMP decarboxylase family. Type 1 subfamily.</text>
</comment>
<gene>
    <name evidence="1" type="primary">pyrF</name>
    <name type="ordered locus">BC_3883</name>
</gene>
<proteinExistence type="inferred from homology"/>
<sequence>MSQSLIVALDFPGKQEVEQFLHHFEGEELFVKVGMELFYKEGPAIITYLKEKGHKIFLDLKLHDIPNTVKSAMRSLASLDVDMVNVHAAGGSSMMKAAIEGLEEGKQEGKERPICIAVTQLTSTSEAMMKKEIGIEKTLEEAVAHYAKLTKESGLDGVVCSTLEVPKLREVCGNEFVTVTPGIRLASDDVNDQVRVATPKRARELGSSYIVVGRSITKAENPLEAYKTVKQQWEGVTV</sequence>